<dbReference type="EMBL" id="CP000143">
    <property type="protein sequence ID" value="ABA79900.1"/>
    <property type="molecule type" value="Genomic_DNA"/>
</dbReference>
<dbReference type="RefSeq" id="WP_011338438.1">
    <property type="nucleotide sequence ID" value="NC_007493.2"/>
</dbReference>
<dbReference type="RefSeq" id="YP_353801.1">
    <property type="nucleotide sequence ID" value="NC_007493.2"/>
</dbReference>
<dbReference type="STRING" id="272943.RSP_0724"/>
<dbReference type="EnsemblBacteria" id="ABA79900">
    <property type="protein sequence ID" value="ABA79900"/>
    <property type="gene ID" value="RSP_0724"/>
</dbReference>
<dbReference type="GeneID" id="3718088"/>
<dbReference type="KEGG" id="rsp:RSP_0724"/>
<dbReference type="PATRIC" id="fig|272943.9.peg.2677"/>
<dbReference type="eggNOG" id="COG1970">
    <property type="taxonomic scope" value="Bacteria"/>
</dbReference>
<dbReference type="OrthoDB" id="9810350at2"/>
<dbReference type="PhylomeDB" id="Q3IZY4"/>
<dbReference type="Proteomes" id="UP000002703">
    <property type="component" value="Chromosome 1"/>
</dbReference>
<dbReference type="GO" id="GO:0005886">
    <property type="term" value="C:plasma membrane"/>
    <property type="evidence" value="ECO:0007669"/>
    <property type="project" value="UniProtKB-SubCell"/>
</dbReference>
<dbReference type="GO" id="GO:0008381">
    <property type="term" value="F:mechanosensitive monoatomic ion channel activity"/>
    <property type="evidence" value="ECO:0007669"/>
    <property type="project" value="UniProtKB-UniRule"/>
</dbReference>
<dbReference type="Gene3D" id="1.10.1200.120">
    <property type="entry name" value="Large-conductance mechanosensitive channel, MscL, domain 1"/>
    <property type="match status" value="1"/>
</dbReference>
<dbReference type="HAMAP" id="MF_00115">
    <property type="entry name" value="MscL"/>
    <property type="match status" value="1"/>
</dbReference>
<dbReference type="InterPro" id="IPR019823">
    <property type="entry name" value="Mechanosensitive_channel_CS"/>
</dbReference>
<dbReference type="InterPro" id="IPR001185">
    <property type="entry name" value="MS_channel"/>
</dbReference>
<dbReference type="InterPro" id="IPR037673">
    <property type="entry name" value="MSC/AndL"/>
</dbReference>
<dbReference type="InterPro" id="IPR036019">
    <property type="entry name" value="MscL_channel"/>
</dbReference>
<dbReference type="NCBIfam" id="TIGR00220">
    <property type="entry name" value="mscL"/>
    <property type="match status" value="1"/>
</dbReference>
<dbReference type="NCBIfam" id="NF001843">
    <property type="entry name" value="PRK00567.1-4"/>
    <property type="match status" value="1"/>
</dbReference>
<dbReference type="NCBIfam" id="NF010557">
    <property type="entry name" value="PRK13952.1"/>
    <property type="match status" value="1"/>
</dbReference>
<dbReference type="PANTHER" id="PTHR30266:SF2">
    <property type="entry name" value="LARGE-CONDUCTANCE MECHANOSENSITIVE CHANNEL"/>
    <property type="match status" value="1"/>
</dbReference>
<dbReference type="PANTHER" id="PTHR30266">
    <property type="entry name" value="MECHANOSENSITIVE CHANNEL MSCL"/>
    <property type="match status" value="1"/>
</dbReference>
<dbReference type="Pfam" id="PF01741">
    <property type="entry name" value="MscL"/>
    <property type="match status" value="1"/>
</dbReference>
<dbReference type="PRINTS" id="PR01264">
    <property type="entry name" value="MECHCHANNEL"/>
</dbReference>
<dbReference type="SUPFAM" id="SSF81330">
    <property type="entry name" value="Gated mechanosensitive channel"/>
    <property type="match status" value="1"/>
</dbReference>
<dbReference type="PROSITE" id="PS01327">
    <property type="entry name" value="MSCL"/>
    <property type="match status" value="1"/>
</dbReference>
<gene>
    <name evidence="1" type="primary">mscL</name>
    <name type="ordered locus">RHOS4_23320</name>
    <name type="ORF">RSP_0724</name>
</gene>
<name>MSCL_CERS4</name>
<organism>
    <name type="scientific">Cereibacter sphaeroides (strain ATCC 17023 / DSM 158 / JCM 6121 / CCUG 31486 / LMG 2827 / NBRC 12203 / NCIMB 8253 / ATH 2.4.1.)</name>
    <name type="common">Rhodobacter sphaeroides</name>
    <dbReference type="NCBI Taxonomy" id="272943"/>
    <lineage>
        <taxon>Bacteria</taxon>
        <taxon>Pseudomonadati</taxon>
        <taxon>Pseudomonadota</taxon>
        <taxon>Alphaproteobacteria</taxon>
        <taxon>Rhodobacterales</taxon>
        <taxon>Paracoccaceae</taxon>
        <taxon>Cereibacter</taxon>
    </lineage>
</organism>
<proteinExistence type="inferred from homology"/>
<reference key="1">
    <citation type="submission" date="2005-09" db="EMBL/GenBank/DDBJ databases">
        <title>Complete sequence of chromosome 1 of Rhodobacter sphaeroides 2.4.1.</title>
        <authorList>
            <person name="Copeland A."/>
            <person name="Lucas S."/>
            <person name="Lapidus A."/>
            <person name="Barry K."/>
            <person name="Detter J.C."/>
            <person name="Glavina T."/>
            <person name="Hammon N."/>
            <person name="Israni S."/>
            <person name="Pitluck S."/>
            <person name="Richardson P."/>
            <person name="Mackenzie C."/>
            <person name="Choudhary M."/>
            <person name="Larimer F."/>
            <person name="Hauser L.J."/>
            <person name="Land M."/>
            <person name="Donohue T.J."/>
            <person name="Kaplan S."/>
        </authorList>
    </citation>
    <scope>NUCLEOTIDE SEQUENCE [LARGE SCALE GENOMIC DNA]</scope>
    <source>
        <strain>ATCC 17023 / DSM 158 / JCM 6121 / CCUG 31486 / LMG 2827 / NBRC 12203 / NCIMB 8253 / ATH 2.4.1.</strain>
    </source>
</reference>
<feature type="chain" id="PRO_0000238029" description="Large-conductance mechanosensitive channel">
    <location>
        <begin position="1"/>
        <end position="146"/>
    </location>
</feature>
<feature type="transmembrane region" description="Helical" evidence="1">
    <location>
        <begin position="21"/>
        <end position="41"/>
    </location>
</feature>
<feature type="transmembrane region" description="Helical" evidence="1">
    <location>
        <begin position="44"/>
        <end position="64"/>
    </location>
</feature>
<feature type="transmembrane region" description="Helical" evidence="1">
    <location>
        <begin position="83"/>
        <end position="103"/>
    </location>
</feature>
<evidence type="ECO:0000255" key="1">
    <source>
        <dbReference type="HAMAP-Rule" id="MF_00115"/>
    </source>
</evidence>
<accession>Q3IZY4</accession>
<protein>
    <recommendedName>
        <fullName evidence="1">Large-conductance mechanosensitive channel</fullName>
    </recommendedName>
</protein>
<keyword id="KW-0997">Cell inner membrane</keyword>
<keyword id="KW-1003">Cell membrane</keyword>
<keyword id="KW-0407">Ion channel</keyword>
<keyword id="KW-0406">Ion transport</keyword>
<keyword id="KW-0472">Membrane</keyword>
<keyword id="KW-1185">Reference proteome</keyword>
<keyword id="KW-0812">Transmembrane</keyword>
<keyword id="KW-1133">Transmembrane helix</keyword>
<keyword id="KW-0813">Transport</keyword>
<sequence>MSILDEFKSFIAKGNVMDMAVGIIIGAAFTGIVSSLVADLINPIIGLITGGIDFSNLFVNLGDGDYVSLAAARDAGAPVFAYGSFITAVINFLIIAWVVFLLVKIVNRVKDAAIHKSAKEAEAQPAGPTQEQLLAEIRDLLKRSPA</sequence>
<comment type="function">
    <text evidence="1">Channel that opens in response to stretch forces in the membrane lipid bilayer. May participate in the regulation of osmotic pressure changes within the cell.</text>
</comment>
<comment type="subunit">
    <text evidence="1">Homopentamer.</text>
</comment>
<comment type="subcellular location">
    <subcellularLocation>
        <location evidence="1">Cell inner membrane</location>
        <topology evidence="1">Multi-pass membrane protein</topology>
    </subcellularLocation>
</comment>
<comment type="similarity">
    <text evidence="1">Belongs to the MscL family.</text>
</comment>